<protein>
    <recommendedName>
        <fullName evidence="1">Small ribosomal subunit protein bS16</fullName>
    </recommendedName>
    <alternativeName>
        <fullName evidence="3">30S ribosomal protein S16</fullName>
    </alternativeName>
</protein>
<comment type="similarity">
    <text evidence="1">Belongs to the bacterial ribosomal protein bS16 family.</text>
</comment>
<proteinExistence type="inferred from homology"/>
<reference key="1">
    <citation type="journal article" date="2001" name="Proc. Natl. Acad. Sci. U.S.A.">
        <title>Complete genome sequence of Caulobacter crescentus.</title>
        <authorList>
            <person name="Nierman W.C."/>
            <person name="Feldblyum T.V."/>
            <person name="Laub M.T."/>
            <person name="Paulsen I.T."/>
            <person name="Nelson K.E."/>
            <person name="Eisen J.A."/>
            <person name="Heidelberg J.F."/>
            <person name="Alley M.R.K."/>
            <person name="Ohta N."/>
            <person name="Maddock J.R."/>
            <person name="Potocka I."/>
            <person name="Nelson W.C."/>
            <person name="Newton A."/>
            <person name="Stephens C."/>
            <person name="Phadke N.D."/>
            <person name="Ely B."/>
            <person name="DeBoy R.T."/>
            <person name="Dodson R.J."/>
            <person name="Durkin A.S."/>
            <person name="Gwinn M.L."/>
            <person name="Haft D.H."/>
            <person name="Kolonay J.F."/>
            <person name="Smit J."/>
            <person name="Craven M.B."/>
            <person name="Khouri H.M."/>
            <person name="Shetty J."/>
            <person name="Berry K.J."/>
            <person name="Utterback T.R."/>
            <person name="Tran K."/>
            <person name="Wolf A.M."/>
            <person name="Vamathevan J.J."/>
            <person name="Ermolaeva M.D."/>
            <person name="White O."/>
            <person name="Salzberg S.L."/>
            <person name="Venter J.C."/>
            <person name="Shapiro L."/>
            <person name="Fraser C.M."/>
        </authorList>
    </citation>
    <scope>NUCLEOTIDE SEQUENCE [LARGE SCALE GENOMIC DNA]</scope>
    <source>
        <strain>ATCC 19089 / CIP 103742 / CB 15</strain>
    </source>
</reference>
<accession>P58122</accession>
<keyword id="KW-1185">Reference proteome</keyword>
<keyword id="KW-0687">Ribonucleoprotein</keyword>
<keyword id="KW-0689">Ribosomal protein</keyword>
<organism>
    <name type="scientific">Caulobacter vibrioides (strain ATCC 19089 / CIP 103742 / CB 15)</name>
    <name type="common">Caulobacter crescentus</name>
    <dbReference type="NCBI Taxonomy" id="190650"/>
    <lineage>
        <taxon>Bacteria</taxon>
        <taxon>Pseudomonadati</taxon>
        <taxon>Pseudomonadota</taxon>
        <taxon>Alphaproteobacteria</taxon>
        <taxon>Caulobacterales</taxon>
        <taxon>Caulobacteraceae</taxon>
        <taxon>Caulobacter</taxon>
    </lineage>
</organism>
<feature type="chain" id="PRO_0000167169" description="Small ribosomal subunit protein bS16">
    <location>
        <begin position="1"/>
        <end position="165"/>
    </location>
</feature>
<feature type="region of interest" description="Disordered" evidence="2">
    <location>
        <begin position="84"/>
        <end position="165"/>
    </location>
</feature>
<feature type="compositionally biased region" description="Basic and acidic residues" evidence="2">
    <location>
        <begin position="89"/>
        <end position="130"/>
    </location>
</feature>
<feature type="compositionally biased region" description="Low complexity" evidence="2">
    <location>
        <begin position="131"/>
        <end position="157"/>
    </location>
</feature>
<sequence length="165" mass="17605">MLKIRLARGGAKKRPYYSIVVADSHSPRDGRFIEKVGTYNPLLKKDDANRVTLKVESIQEWLKKGAQPTDRVARFLAAQGLVAWTHGNNPEKGKPGKKAQERLAERAQREEERKQAEADAKAAAEAEKAAAAEAAAAAAAAPAVEEAPAEEAPAAEAPAEEAAEG</sequence>
<dbReference type="EMBL" id="AE005673">
    <property type="protein sequence ID" value="AAK25614.1"/>
    <property type="molecule type" value="Genomic_DNA"/>
</dbReference>
<dbReference type="PIR" id="B87702">
    <property type="entry name" value="B87702"/>
</dbReference>
<dbReference type="RefSeq" id="NP_422446.1">
    <property type="nucleotide sequence ID" value="NC_002696.2"/>
</dbReference>
<dbReference type="RefSeq" id="WP_010921479.1">
    <property type="nucleotide sequence ID" value="NC_002696.2"/>
</dbReference>
<dbReference type="SMR" id="P58122"/>
<dbReference type="STRING" id="190650.CC_3652"/>
<dbReference type="EnsemblBacteria" id="AAK25614">
    <property type="protein sequence ID" value="AAK25614"/>
    <property type="gene ID" value="CC_3652"/>
</dbReference>
<dbReference type="KEGG" id="ccr:CC_3652"/>
<dbReference type="PATRIC" id="fig|190650.5.peg.3653"/>
<dbReference type="eggNOG" id="COG0228">
    <property type="taxonomic scope" value="Bacteria"/>
</dbReference>
<dbReference type="HOGENOM" id="CLU_100590_3_0_5"/>
<dbReference type="BioCyc" id="CAULO:CC3652-MONOMER"/>
<dbReference type="Proteomes" id="UP000001816">
    <property type="component" value="Chromosome"/>
</dbReference>
<dbReference type="GO" id="GO:0005737">
    <property type="term" value="C:cytoplasm"/>
    <property type="evidence" value="ECO:0007669"/>
    <property type="project" value="UniProtKB-ARBA"/>
</dbReference>
<dbReference type="GO" id="GO:0015935">
    <property type="term" value="C:small ribosomal subunit"/>
    <property type="evidence" value="ECO:0007669"/>
    <property type="project" value="TreeGrafter"/>
</dbReference>
<dbReference type="GO" id="GO:0003735">
    <property type="term" value="F:structural constituent of ribosome"/>
    <property type="evidence" value="ECO:0007669"/>
    <property type="project" value="InterPro"/>
</dbReference>
<dbReference type="GO" id="GO:0006412">
    <property type="term" value="P:translation"/>
    <property type="evidence" value="ECO:0007669"/>
    <property type="project" value="UniProtKB-UniRule"/>
</dbReference>
<dbReference type="Gene3D" id="3.30.1320.10">
    <property type="match status" value="1"/>
</dbReference>
<dbReference type="HAMAP" id="MF_00385">
    <property type="entry name" value="Ribosomal_bS16"/>
    <property type="match status" value="1"/>
</dbReference>
<dbReference type="InterPro" id="IPR000307">
    <property type="entry name" value="Ribosomal_bS16"/>
</dbReference>
<dbReference type="InterPro" id="IPR020592">
    <property type="entry name" value="Ribosomal_bS16_CS"/>
</dbReference>
<dbReference type="InterPro" id="IPR023803">
    <property type="entry name" value="Ribosomal_bS16_dom_sf"/>
</dbReference>
<dbReference type="NCBIfam" id="TIGR00002">
    <property type="entry name" value="S16"/>
    <property type="match status" value="1"/>
</dbReference>
<dbReference type="PANTHER" id="PTHR12919">
    <property type="entry name" value="30S RIBOSOMAL PROTEIN S16"/>
    <property type="match status" value="1"/>
</dbReference>
<dbReference type="PANTHER" id="PTHR12919:SF20">
    <property type="entry name" value="SMALL RIBOSOMAL SUBUNIT PROTEIN BS16M"/>
    <property type="match status" value="1"/>
</dbReference>
<dbReference type="Pfam" id="PF00886">
    <property type="entry name" value="Ribosomal_S16"/>
    <property type="match status" value="1"/>
</dbReference>
<dbReference type="SUPFAM" id="SSF54565">
    <property type="entry name" value="Ribosomal protein S16"/>
    <property type="match status" value="1"/>
</dbReference>
<dbReference type="PROSITE" id="PS00732">
    <property type="entry name" value="RIBOSOMAL_S16"/>
    <property type="match status" value="1"/>
</dbReference>
<name>RS16_CAUVC</name>
<evidence type="ECO:0000255" key="1">
    <source>
        <dbReference type="HAMAP-Rule" id="MF_00385"/>
    </source>
</evidence>
<evidence type="ECO:0000256" key="2">
    <source>
        <dbReference type="SAM" id="MobiDB-lite"/>
    </source>
</evidence>
<evidence type="ECO:0000305" key="3"/>
<gene>
    <name evidence="1" type="primary">rpsP</name>
    <name type="ordered locus">CC_3652</name>
</gene>